<accession>A4FKA9</accession>
<organism>
    <name type="scientific">Saccharopolyspora erythraea (strain ATCC 11635 / DSM 40517 / JCM 4748 / NBRC 13426 / NCIMB 8594 / NRRL 2338)</name>
    <dbReference type="NCBI Taxonomy" id="405948"/>
    <lineage>
        <taxon>Bacteria</taxon>
        <taxon>Bacillati</taxon>
        <taxon>Actinomycetota</taxon>
        <taxon>Actinomycetes</taxon>
        <taxon>Pseudonocardiales</taxon>
        <taxon>Pseudonocardiaceae</taxon>
        <taxon>Saccharopolyspora</taxon>
    </lineage>
</organism>
<dbReference type="EC" id="6.3.4.2" evidence="1"/>
<dbReference type="EMBL" id="AM420293">
    <property type="protein sequence ID" value="CAM04484.1"/>
    <property type="molecule type" value="Genomic_DNA"/>
</dbReference>
<dbReference type="RefSeq" id="WP_011874648.1">
    <property type="nucleotide sequence ID" value="NC_009142.1"/>
</dbReference>
<dbReference type="SMR" id="A4FKA9"/>
<dbReference type="STRING" id="405948.SACE_5244"/>
<dbReference type="MEROPS" id="C26.964"/>
<dbReference type="KEGG" id="sen:SACE_5244"/>
<dbReference type="eggNOG" id="COG0504">
    <property type="taxonomic scope" value="Bacteria"/>
</dbReference>
<dbReference type="HOGENOM" id="CLU_011675_5_0_11"/>
<dbReference type="UniPathway" id="UPA00159">
    <property type="reaction ID" value="UER00277"/>
</dbReference>
<dbReference type="Proteomes" id="UP000006728">
    <property type="component" value="Chromosome"/>
</dbReference>
<dbReference type="GO" id="GO:0005829">
    <property type="term" value="C:cytosol"/>
    <property type="evidence" value="ECO:0007669"/>
    <property type="project" value="TreeGrafter"/>
</dbReference>
<dbReference type="GO" id="GO:0005524">
    <property type="term" value="F:ATP binding"/>
    <property type="evidence" value="ECO:0007669"/>
    <property type="project" value="UniProtKB-KW"/>
</dbReference>
<dbReference type="GO" id="GO:0003883">
    <property type="term" value="F:CTP synthase activity"/>
    <property type="evidence" value="ECO:0007669"/>
    <property type="project" value="UniProtKB-UniRule"/>
</dbReference>
<dbReference type="GO" id="GO:0004359">
    <property type="term" value="F:glutaminase activity"/>
    <property type="evidence" value="ECO:0007669"/>
    <property type="project" value="RHEA"/>
</dbReference>
<dbReference type="GO" id="GO:0042802">
    <property type="term" value="F:identical protein binding"/>
    <property type="evidence" value="ECO:0007669"/>
    <property type="project" value="TreeGrafter"/>
</dbReference>
<dbReference type="GO" id="GO:0046872">
    <property type="term" value="F:metal ion binding"/>
    <property type="evidence" value="ECO:0007669"/>
    <property type="project" value="UniProtKB-KW"/>
</dbReference>
<dbReference type="GO" id="GO:0044210">
    <property type="term" value="P:'de novo' CTP biosynthetic process"/>
    <property type="evidence" value="ECO:0007669"/>
    <property type="project" value="UniProtKB-UniRule"/>
</dbReference>
<dbReference type="GO" id="GO:0019856">
    <property type="term" value="P:pyrimidine nucleobase biosynthetic process"/>
    <property type="evidence" value="ECO:0007669"/>
    <property type="project" value="TreeGrafter"/>
</dbReference>
<dbReference type="CDD" id="cd03113">
    <property type="entry name" value="CTPS_N"/>
    <property type="match status" value="1"/>
</dbReference>
<dbReference type="CDD" id="cd01746">
    <property type="entry name" value="GATase1_CTP_Synthase"/>
    <property type="match status" value="1"/>
</dbReference>
<dbReference type="FunFam" id="3.40.50.300:FF:000009">
    <property type="entry name" value="CTP synthase"/>
    <property type="match status" value="1"/>
</dbReference>
<dbReference type="FunFam" id="3.40.50.880:FF:000002">
    <property type="entry name" value="CTP synthase"/>
    <property type="match status" value="1"/>
</dbReference>
<dbReference type="Gene3D" id="3.40.50.880">
    <property type="match status" value="1"/>
</dbReference>
<dbReference type="Gene3D" id="3.40.50.300">
    <property type="entry name" value="P-loop containing nucleotide triphosphate hydrolases"/>
    <property type="match status" value="1"/>
</dbReference>
<dbReference type="HAMAP" id="MF_01227">
    <property type="entry name" value="PyrG"/>
    <property type="match status" value="1"/>
</dbReference>
<dbReference type="InterPro" id="IPR029062">
    <property type="entry name" value="Class_I_gatase-like"/>
</dbReference>
<dbReference type="InterPro" id="IPR004468">
    <property type="entry name" value="CTP_synthase"/>
</dbReference>
<dbReference type="InterPro" id="IPR017456">
    <property type="entry name" value="CTP_synthase_N"/>
</dbReference>
<dbReference type="InterPro" id="IPR017926">
    <property type="entry name" value="GATASE"/>
</dbReference>
<dbReference type="InterPro" id="IPR033828">
    <property type="entry name" value="GATase1_CTP_Synthase"/>
</dbReference>
<dbReference type="InterPro" id="IPR027417">
    <property type="entry name" value="P-loop_NTPase"/>
</dbReference>
<dbReference type="NCBIfam" id="NF003792">
    <property type="entry name" value="PRK05380.1"/>
    <property type="match status" value="1"/>
</dbReference>
<dbReference type="NCBIfam" id="TIGR00337">
    <property type="entry name" value="PyrG"/>
    <property type="match status" value="1"/>
</dbReference>
<dbReference type="PANTHER" id="PTHR11550">
    <property type="entry name" value="CTP SYNTHASE"/>
    <property type="match status" value="1"/>
</dbReference>
<dbReference type="PANTHER" id="PTHR11550:SF0">
    <property type="entry name" value="CTP SYNTHASE-RELATED"/>
    <property type="match status" value="1"/>
</dbReference>
<dbReference type="Pfam" id="PF06418">
    <property type="entry name" value="CTP_synth_N"/>
    <property type="match status" value="1"/>
</dbReference>
<dbReference type="Pfam" id="PF00117">
    <property type="entry name" value="GATase"/>
    <property type="match status" value="1"/>
</dbReference>
<dbReference type="SUPFAM" id="SSF52317">
    <property type="entry name" value="Class I glutamine amidotransferase-like"/>
    <property type="match status" value="1"/>
</dbReference>
<dbReference type="SUPFAM" id="SSF52540">
    <property type="entry name" value="P-loop containing nucleoside triphosphate hydrolases"/>
    <property type="match status" value="1"/>
</dbReference>
<dbReference type="PROSITE" id="PS51273">
    <property type="entry name" value="GATASE_TYPE_1"/>
    <property type="match status" value="1"/>
</dbReference>
<proteinExistence type="inferred from homology"/>
<gene>
    <name evidence="1" type="primary">pyrG</name>
    <name type="ordered locus">SACE_5244</name>
</gene>
<keyword id="KW-0067">ATP-binding</keyword>
<keyword id="KW-0315">Glutamine amidotransferase</keyword>
<keyword id="KW-0436">Ligase</keyword>
<keyword id="KW-0460">Magnesium</keyword>
<keyword id="KW-0479">Metal-binding</keyword>
<keyword id="KW-0547">Nucleotide-binding</keyword>
<keyword id="KW-0665">Pyrimidine biosynthesis</keyword>
<keyword id="KW-1185">Reference proteome</keyword>
<comment type="function">
    <text evidence="1">Catalyzes the ATP-dependent amination of UTP to CTP with either L-glutamine or ammonia as the source of nitrogen. Regulates intracellular CTP levels through interactions with the four ribonucleotide triphosphates.</text>
</comment>
<comment type="catalytic activity">
    <reaction evidence="1">
        <text>UTP + L-glutamine + ATP + H2O = CTP + L-glutamate + ADP + phosphate + 2 H(+)</text>
        <dbReference type="Rhea" id="RHEA:26426"/>
        <dbReference type="ChEBI" id="CHEBI:15377"/>
        <dbReference type="ChEBI" id="CHEBI:15378"/>
        <dbReference type="ChEBI" id="CHEBI:29985"/>
        <dbReference type="ChEBI" id="CHEBI:30616"/>
        <dbReference type="ChEBI" id="CHEBI:37563"/>
        <dbReference type="ChEBI" id="CHEBI:43474"/>
        <dbReference type="ChEBI" id="CHEBI:46398"/>
        <dbReference type="ChEBI" id="CHEBI:58359"/>
        <dbReference type="ChEBI" id="CHEBI:456216"/>
        <dbReference type="EC" id="6.3.4.2"/>
    </reaction>
</comment>
<comment type="catalytic activity">
    <reaction evidence="1">
        <text>L-glutamine + H2O = L-glutamate + NH4(+)</text>
        <dbReference type="Rhea" id="RHEA:15889"/>
        <dbReference type="ChEBI" id="CHEBI:15377"/>
        <dbReference type="ChEBI" id="CHEBI:28938"/>
        <dbReference type="ChEBI" id="CHEBI:29985"/>
        <dbReference type="ChEBI" id="CHEBI:58359"/>
    </reaction>
</comment>
<comment type="catalytic activity">
    <reaction evidence="1">
        <text>UTP + NH4(+) + ATP = CTP + ADP + phosphate + 2 H(+)</text>
        <dbReference type="Rhea" id="RHEA:16597"/>
        <dbReference type="ChEBI" id="CHEBI:15378"/>
        <dbReference type="ChEBI" id="CHEBI:28938"/>
        <dbReference type="ChEBI" id="CHEBI:30616"/>
        <dbReference type="ChEBI" id="CHEBI:37563"/>
        <dbReference type="ChEBI" id="CHEBI:43474"/>
        <dbReference type="ChEBI" id="CHEBI:46398"/>
        <dbReference type="ChEBI" id="CHEBI:456216"/>
    </reaction>
</comment>
<comment type="activity regulation">
    <text evidence="1">Allosterically activated by GTP, when glutamine is the substrate; GTP has no effect on the reaction when ammonia is the substrate. The allosteric effector GTP functions by stabilizing the protein conformation that binds the tetrahedral intermediate(s) formed during glutamine hydrolysis. Inhibited by the product CTP, via allosteric rather than competitive inhibition.</text>
</comment>
<comment type="pathway">
    <text evidence="1">Pyrimidine metabolism; CTP biosynthesis via de novo pathway; CTP from UDP: step 2/2.</text>
</comment>
<comment type="subunit">
    <text evidence="1">Homotetramer.</text>
</comment>
<comment type="miscellaneous">
    <text evidence="1">CTPSs have evolved a hybrid strategy for distinguishing between UTP and CTP. The overlapping regions of the product feedback inhibitory and substrate sites recognize a common feature in both compounds, the triphosphate moiety. To differentiate isosteric substrate and product pyrimidine rings, an additional pocket far from the expected kinase/ligase catalytic site, specifically recognizes the cytosine and ribose portions of the product inhibitor.</text>
</comment>
<comment type="similarity">
    <text evidence="1">Belongs to the CTP synthase family.</text>
</comment>
<feature type="chain" id="PRO_1000139555" description="CTP synthase">
    <location>
        <begin position="1"/>
        <end position="568"/>
    </location>
</feature>
<feature type="domain" description="Glutamine amidotransferase type-1" evidence="1">
    <location>
        <begin position="301"/>
        <end position="550"/>
    </location>
</feature>
<feature type="region of interest" description="Amidoligase domain" evidence="1">
    <location>
        <begin position="1"/>
        <end position="276"/>
    </location>
</feature>
<feature type="active site" description="Nucleophile; for glutamine hydrolysis" evidence="1">
    <location>
        <position position="391"/>
    </location>
</feature>
<feature type="active site" evidence="1">
    <location>
        <position position="523"/>
    </location>
</feature>
<feature type="active site" evidence="1">
    <location>
        <position position="525"/>
    </location>
</feature>
<feature type="binding site" evidence="1">
    <location>
        <position position="18"/>
    </location>
    <ligand>
        <name>CTP</name>
        <dbReference type="ChEBI" id="CHEBI:37563"/>
        <note>allosteric inhibitor</note>
    </ligand>
</feature>
<feature type="binding site" evidence="1">
    <location>
        <position position="18"/>
    </location>
    <ligand>
        <name>UTP</name>
        <dbReference type="ChEBI" id="CHEBI:46398"/>
    </ligand>
</feature>
<feature type="binding site" evidence="1">
    <location>
        <begin position="19"/>
        <end position="24"/>
    </location>
    <ligand>
        <name>ATP</name>
        <dbReference type="ChEBI" id="CHEBI:30616"/>
    </ligand>
</feature>
<feature type="binding site" evidence="1">
    <location>
        <position position="76"/>
    </location>
    <ligand>
        <name>ATP</name>
        <dbReference type="ChEBI" id="CHEBI:30616"/>
    </ligand>
</feature>
<feature type="binding site" evidence="1">
    <location>
        <position position="76"/>
    </location>
    <ligand>
        <name>Mg(2+)</name>
        <dbReference type="ChEBI" id="CHEBI:18420"/>
    </ligand>
</feature>
<feature type="binding site" evidence="1">
    <location>
        <position position="150"/>
    </location>
    <ligand>
        <name>Mg(2+)</name>
        <dbReference type="ChEBI" id="CHEBI:18420"/>
    </ligand>
</feature>
<feature type="binding site" evidence="1">
    <location>
        <begin position="157"/>
        <end position="159"/>
    </location>
    <ligand>
        <name>CTP</name>
        <dbReference type="ChEBI" id="CHEBI:37563"/>
        <note>allosteric inhibitor</note>
    </ligand>
</feature>
<feature type="binding site" evidence="1">
    <location>
        <begin position="197"/>
        <end position="202"/>
    </location>
    <ligand>
        <name>CTP</name>
        <dbReference type="ChEBI" id="CHEBI:37563"/>
        <note>allosteric inhibitor</note>
    </ligand>
</feature>
<feature type="binding site" evidence="1">
    <location>
        <begin position="197"/>
        <end position="202"/>
    </location>
    <ligand>
        <name>UTP</name>
        <dbReference type="ChEBI" id="CHEBI:46398"/>
    </ligand>
</feature>
<feature type="binding site" evidence="1">
    <location>
        <position position="233"/>
    </location>
    <ligand>
        <name>CTP</name>
        <dbReference type="ChEBI" id="CHEBI:37563"/>
        <note>allosteric inhibitor</note>
    </ligand>
</feature>
<feature type="binding site" evidence="1">
    <location>
        <position position="233"/>
    </location>
    <ligand>
        <name>UTP</name>
        <dbReference type="ChEBI" id="CHEBI:46398"/>
    </ligand>
</feature>
<feature type="binding site" evidence="1">
    <location>
        <position position="364"/>
    </location>
    <ligand>
        <name>L-glutamine</name>
        <dbReference type="ChEBI" id="CHEBI:58359"/>
    </ligand>
</feature>
<feature type="binding site" evidence="1">
    <location>
        <begin position="392"/>
        <end position="395"/>
    </location>
    <ligand>
        <name>L-glutamine</name>
        <dbReference type="ChEBI" id="CHEBI:58359"/>
    </ligand>
</feature>
<feature type="binding site" evidence="1">
    <location>
        <position position="415"/>
    </location>
    <ligand>
        <name>L-glutamine</name>
        <dbReference type="ChEBI" id="CHEBI:58359"/>
    </ligand>
</feature>
<feature type="binding site" evidence="1">
    <location>
        <position position="476"/>
    </location>
    <ligand>
        <name>L-glutamine</name>
        <dbReference type="ChEBI" id="CHEBI:58359"/>
    </ligand>
</feature>
<name>PYRG_SACEN</name>
<sequence length="568" mass="62051">MPQARTIKHVFVTGGVASSLGKGLTASSLGELLTSRGLRVTMQKLDPYLNVDPGTMNPFQHGEVFVTEDGAETDLDIGHYERFLDRDLTRNANVTTGQVYSAVIAKERRGEYLGDTVQVIPHITDQIKARIRVMAEPDEDGRTPDVVITEVGGTVGDIESLPFLEACRQVRHDVGRDNCFFLHVSLVPYLAPSGELKTKPTQHSVAALRNIGIQPDALVCRADRELPEDLKRKIALMCDVDSDGVVACPDAPSIYDIPRVLHSEGLDAYLVRRLGLPFRDVDWSVWGDLLDRVHKPSERVRIALVGKYVDLPDAYLSVTEALRAGGFAHRAKVEIAWVPSDTCETESGAAHALSGMDGVLIPGGFGVRGIEGKLGAIRYARTHGIPTLGLCLGLQCMVIETARALAGLERANSTEFEEPCQHPVISTMADQHDVISGDRDMGGTMRLGSYPAKLVPGSVVAEAYGETEVAERHRHRYEVNNSYRDRLSKAGLVFSGTSPDGRLVEFVELPRDQHPFFVGTQAHPELKSRPTRPHPLFAAFVNAALEYRAAERLPVDISDSVQESTASV</sequence>
<protein>
    <recommendedName>
        <fullName evidence="1">CTP synthase</fullName>
        <ecNumber evidence="1">6.3.4.2</ecNumber>
    </recommendedName>
    <alternativeName>
        <fullName evidence="1">Cytidine 5'-triphosphate synthase</fullName>
    </alternativeName>
    <alternativeName>
        <fullName evidence="1">Cytidine triphosphate synthetase</fullName>
        <shortName evidence="1">CTP synthetase</shortName>
        <shortName evidence="1">CTPS</shortName>
    </alternativeName>
    <alternativeName>
        <fullName evidence="1">UTP--ammonia ligase</fullName>
    </alternativeName>
</protein>
<evidence type="ECO:0000255" key="1">
    <source>
        <dbReference type="HAMAP-Rule" id="MF_01227"/>
    </source>
</evidence>
<reference key="1">
    <citation type="journal article" date="2007" name="Nat. Biotechnol.">
        <title>Complete genome sequence of the erythromycin-producing bacterium Saccharopolyspora erythraea NRRL23338.</title>
        <authorList>
            <person name="Oliynyk M."/>
            <person name="Samborskyy M."/>
            <person name="Lester J.B."/>
            <person name="Mironenko T."/>
            <person name="Scott N."/>
            <person name="Dickens S."/>
            <person name="Haydock S.F."/>
            <person name="Leadlay P.F."/>
        </authorList>
    </citation>
    <scope>NUCLEOTIDE SEQUENCE [LARGE SCALE GENOMIC DNA]</scope>
    <source>
        <strain>ATCC 11635 / DSM 40517 / JCM 4748 / NBRC 13426 / NCIMB 8594 / NRRL 2338</strain>
    </source>
</reference>